<sequence>MTESVLDYMSRLGRDARAASRLLARAATAQKNRALLAAADALDAARAELSLANEQDLAAGRANGLEPAMLDRLALTPARIDDMIEGLRQVATLPDPIGEIRDMRYVPSGIQIGKMRVPLGVVGIIYESRPNVTIDAASLCLKSGNATILRGGSEAIHSNQAIARCIQQGLAEAGLPAAAVQVVETTDRAAVGALISMPEYVDVIVPRGGKGLIERISREAKVPVIKHLDGICHVYIDVAADLDKAIRVADNAKTQRYAPCNTMETLLVHAGIAERVLPPLATIYREKGVELRGDAATRALLGADVLEATEEDWRTEYNAPILSIRIVDGLDAAIEHINTYGSQHTDAIITENFSDARRFLAEVDSASVMVNASTRFADGFEYGLGAEIGISTDKLHARGPVGLEGLTSEKYVVFGDGHVRT</sequence>
<dbReference type="EC" id="1.2.1.41" evidence="1"/>
<dbReference type="EMBL" id="FM209186">
    <property type="protein sequence ID" value="CAW25696.1"/>
    <property type="molecule type" value="Genomic_DNA"/>
</dbReference>
<dbReference type="RefSeq" id="WP_012613612.1">
    <property type="nucleotide sequence ID" value="NC_011770.1"/>
</dbReference>
<dbReference type="SMR" id="B7V8A7"/>
<dbReference type="KEGG" id="pag:PLES_09691"/>
<dbReference type="HOGENOM" id="CLU_030231_0_0_6"/>
<dbReference type="UniPathway" id="UPA00098">
    <property type="reaction ID" value="UER00360"/>
</dbReference>
<dbReference type="GO" id="GO:0005737">
    <property type="term" value="C:cytoplasm"/>
    <property type="evidence" value="ECO:0007669"/>
    <property type="project" value="UniProtKB-SubCell"/>
</dbReference>
<dbReference type="GO" id="GO:0004350">
    <property type="term" value="F:glutamate-5-semialdehyde dehydrogenase activity"/>
    <property type="evidence" value="ECO:0007669"/>
    <property type="project" value="UniProtKB-UniRule"/>
</dbReference>
<dbReference type="GO" id="GO:0050661">
    <property type="term" value="F:NADP binding"/>
    <property type="evidence" value="ECO:0007669"/>
    <property type="project" value="InterPro"/>
</dbReference>
<dbReference type="GO" id="GO:0055129">
    <property type="term" value="P:L-proline biosynthetic process"/>
    <property type="evidence" value="ECO:0007669"/>
    <property type="project" value="UniProtKB-UniRule"/>
</dbReference>
<dbReference type="CDD" id="cd07079">
    <property type="entry name" value="ALDH_F18-19_ProA-GPR"/>
    <property type="match status" value="1"/>
</dbReference>
<dbReference type="FunFam" id="3.40.309.10:FF:000006">
    <property type="entry name" value="Gamma-glutamyl phosphate reductase"/>
    <property type="match status" value="1"/>
</dbReference>
<dbReference type="Gene3D" id="3.40.605.10">
    <property type="entry name" value="Aldehyde Dehydrogenase, Chain A, domain 1"/>
    <property type="match status" value="1"/>
</dbReference>
<dbReference type="Gene3D" id="3.40.309.10">
    <property type="entry name" value="Aldehyde Dehydrogenase, Chain A, domain 2"/>
    <property type="match status" value="1"/>
</dbReference>
<dbReference type="HAMAP" id="MF_00412">
    <property type="entry name" value="ProA"/>
    <property type="match status" value="1"/>
</dbReference>
<dbReference type="InterPro" id="IPR016161">
    <property type="entry name" value="Ald_DH/histidinol_DH"/>
</dbReference>
<dbReference type="InterPro" id="IPR016163">
    <property type="entry name" value="Ald_DH_C"/>
</dbReference>
<dbReference type="InterPro" id="IPR016162">
    <property type="entry name" value="Ald_DH_N"/>
</dbReference>
<dbReference type="InterPro" id="IPR015590">
    <property type="entry name" value="Aldehyde_DH_dom"/>
</dbReference>
<dbReference type="InterPro" id="IPR020593">
    <property type="entry name" value="G-glutamylP_reductase_CS"/>
</dbReference>
<dbReference type="InterPro" id="IPR012134">
    <property type="entry name" value="Glu-5-SA_DH"/>
</dbReference>
<dbReference type="InterPro" id="IPR000965">
    <property type="entry name" value="GPR_dom"/>
</dbReference>
<dbReference type="NCBIfam" id="NF001221">
    <property type="entry name" value="PRK00197.1"/>
    <property type="match status" value="1"/>
</dbReference>
<dbReference type="NCBIfam" id="TIGR00407">
    <property type="entry name" value="proA"/>
    <property type="match status" value="1"/>
</dbReference>
<dbReference type="PANTHER" id="PTHR11063:SF8">
    <property type="entry name" value="DELTA-1-PYRROLINE-5-CARBOXYLATE SYNTHASE"/>
    <property type="match status" value="1"/>
</dbReference>
<dbReference type="PANTHER" id="PTHR11063">
    <property type="entry name" value="GLUTAMATE SEMIALDEHYDE DEHYDROGENASE"/>
    <property type="match status" value="1"/>
</dbReference>
<dbReference type="Pfam" id="PF00171">
    <property type="entry name" value="Aldedh"/>
    <property type="match status" value="2"/>
</dbReference>
<dbReference type="PIRSF" id="PIRSF000151">
    <property type="entry name" value="GPR"/>
    <property type="match status" value="1"/>
</dbReference>
<dbReference type="SUPFAM" id="SSF53720">
    <property type="entry name" value="ALDH-like"/>
    <property type="match status" value="1"/>
</dbReference>
<dbReference type="PROSITE" id="PS01223">
    <property type="entry name" value="PROA"/>
    <property type="match status" value="1"/>
</dbReference>
<keyword id="KW-0028">Amino-acid biosynthesis</keyword>
<keyword id="KW-0963">Cytoplasm</keyword>
<keyword id="KW-0521">NADP</keyword>
<keyword id="KW-0560">Oxidoreductase</keyword>
<keyword id="KW-0641">Proline biosynthesis</keyword>
<feature type="chain" id="PRO_1000193637" description="Gamma-glutamyl phosphate reductase">
    <location>
        <begin position="1"/>
        <end position="421"/>
    </location>
</feature>
<organism>
    <name type="scientific">Pseudomonas aeruginosa (strain LESB58)</name>
    <dbReference type="NCBI Taxonomy" id="557722"/>
    <lineage>
        <taxon>Bacteria</taxon>
        <taxon>Pseudomonadati</taxon>
        <taxon>Pseudomonadota</taxon>
        <taxon>Gammaproteobacteria</taxon>
        <taxon>Pseudomonadales</taxon>
        <taxon>Pseudomonadaceae</taxon>
        <taxon>Pseudomonas</taxon>
    </lineage>
</organism>
<comment type="function">
    <text evidence="1">Catalyzes the NADPH-dependent reduction of L-glutamate 5-phosphate into L-glutamate 5-semialdehyde and phosphate. The product spontaneously undergoes cyclization to form 1-pyrroline-5-carboxylate.</text>
</comment>
<comment type="catalytic activity">
    <reaction evidence="1">
        <text>L-glutamate 5-semialdehyde + phosphate + NADP(+) = L-glutamyl 5-phosphate + NADPH + H(+)</text>
        <dbReference type="Rhea" id="RHEA:19541"/>
        <dbReference type="ChEBI" id="CHEBI:15378"/>
        <dbReference type="ChEBI" id="CHEBI:43474"/>
        <dbReference type="ChEBI" id="CHEBI:57783"/>
        <dbReference type="ChEBI" id="CHEBI:58066"/>
        <dbReference type="ChEBI" id="CHEBI:58274"/>
        <dbReference type="ChEBI" id="CHEBI:58349"/>
        <dbReference type="EC" id="1.2.1.41"/>
    </reaction>
</comment>
<comment type="pathway">
    <text evidence="1">Amino-acid biosynthesis; L-proline biosynthesis; L-glutamate 5-semialdehyde from L-glutamate: step 2/2.</text>
</comment>
<comment type="subcellular location">
    <subcellularLocation>
        <location evidence="1">Cytoplasm</location>
    </subcellularLocation>
</comment>
<comment type="similarity">
    <text evidence="1">Belongs to the gamma-glutamyl phosphate reductase family.</text>
</comment>
<evidence type="ECO:0000255" key="1">
    <source>
        <dbReference type="HAMAP-Rule" id="MF_00412"/>
    </source>
</evidence>
<proteinExistence type="inferred from homology"/>
<gene>
    <name evidence="1" type="primary">proA</name>
    <name type="ordered locus">PLES_09691</name>
</gene>
<name>PROA_PSEA8</name>
<protein>
    <recommendedName>
        <fullName evidence="1">Gamma-glutamyl phosphate reductase</fullName>
        <shortName evidence="1">GPR</shortName>
        <ecNumber evidence="1">1.2.1.41</ecNumber>
    </recommendedName>
    <alternativeName>
        <fullName evidence="1">Glutamate-5-semialdehyde dehydrogenase</fullName>
    </alternativeName>
    <alternativeName>
        <fullName evidence="1">Glutamyl-gamma-semialdehyde dehydrogenase</fullName>
        <shortName evidence="1">GSA dehydrogenase</shortName>
    </alternativeName>
</protein>
<reference key="1">
    <citation type="journal article" date="2009" name="Genome Res.">
        <title>Newly introduced genomic prophage islands are critical determinants of in vivo competitiveness in the Liverpool epidemic strain of Pseudomonas aeruginosa.</title>
        <authorList>
            <person name="Winstanley C."/>
            <person name="Langille M.G.I."/>
            <person name="Fothergill J.L."/>
            <person name="Kukavica-Ibrulj I."/>
            <person name="Paradis-Bleau C."/>
            <person name="Sanschagrin F."/>
            <person name="Thomson N.R."/>
            <person name="Winsor G.L."/>
            <person name="Quail M.A."/>
            <person name="Lennard N."/>
            <person name="Bignell A."/>
            <person name="Clarke L."/>
            <person name="Seeger K."/>
            <person name="Saunders D."/>
            <person name="Harris D."/>
            <person name="Parkhill J."/>
            <person name="Hancock R.E.W."/>
            <person name="Brinkman F.S.L."/>
            <person name="Levesque R.C."/>
        </authorList>
    </citation>
    <scope>NUCLEOTIDE SEQUENCE [LARGE SCALE GENOMIC DNA]</scope>
    <source>
        <strain>LESB58</strain>
    </source>
</reference>
<accession>B7V8A7</accession>